<sequence length="72" mass="8303">MSKEDSFEMEGTVVDTLPNTMFRVELENGHVVTAHISGKMRKNYIRILTGDKVRVELTPYDLSKGRITYRAR</sequence>
<proteinExistence type="inferred from homology"/>
<gene>
    <name evidence="1" type="primary">infA</name>
    <name type="ordered locus">PSEEN2208</name>
</gene>
<dbReference type="EMBL" id="CT573326">
    <property type="protein sequence ID" value="CAK15028.1"/>
    <property type="molecule type" value="Genomic_DNA"/>
</dbReference>
<dbReference type="RefSeq" id="WP_002553999.1">
    <property type="nucleotide sequence ID" value="NC_008027.1"/>
</dbReference>
<dbReference type="SMR" id="Q1IBD7"/>
<dbReference type="STRING" id="384676.PSEEN2208"/>
<dbReference type="GeneID" id="98638452"/>
<dbReference type="KEGG" id="pen:PSEEN2208"/>
<dbReference type="eggNOG" id="COG0361">
    <property type="taxonomic scope" value="Bacteria"/>
</dbReference>
<dbReference type="HOGENOM" id="CLU_151267_1_0_6"/>
<dbReference type="OrthoDB" id="9803250at2"/>
<dbReference type="Proteomes" id="UP000000658">
    <property type="component" value="Chromosome"/>
</dbReference>
<dbReference type="GO" id="GO:0005829">
    <property type="term" value="C:cytosol"/>
    <property type="evidence" value="ECO:0007669"/>
    <property type="project" value="TreeGrafter"/>
</dbReference>
<dbReference type="GO" id="GO:0043022">
    <property type="term" value="F:ribosome binding"/>
    <property type="evidence" value="ECO:0007669"/>
    <property type="project" value="UniProtKB-UniRule"/>
</dbReference>
<dbReference type="GO" id="GO:0019843">
    <property type="term" value="F:rRNA binding"/>
    <property type="evidence" value="ECO:0007669"/>
    <property type="project" value="UniProtKB-UniRule"/>
</dbReference>
<dbReference type="GO" id="GO:0003743">
    <property type="term" value="F:translation initiation factor activity"/>
    <property type="evidence" value="ECO:0007669"/>
    <property type="project" value="UniProtKB-UniRule"/>
</dbReference>
<dbReference type="CDD" id="cd04451">
    <property type="entry name" value="S1_IF1"/>
    <property type="match status" value="1"/>
</dbReference>
<dbReference type="FunFam" id="2.40.50.140:FF:000002">
    <property type="entry name" value="Translation initiation factor IF-1"/>
    <property type="match status" value="1"/>
</dbReference>
<dbReference type="Gene3D" id="2.40.50.140">
    <property type="entry name" value="Nucleic acid-binding proteins"/>
    <property type="match status" value="1"/>
</dbReference>
<dbReference type="HAMAP" id="MF_00075">
    <property type="entry name" value="IF_1"/>
    <property type="match status" value="1"/>
</dbReference>
<dbReference type="InterPro" id="IPR012340">
    <property type="entry name" value="NA-bd_OB-fold"/>
</dbReference>
<dbReference type="InterPro" id="IPR006196">
    <property type="entry name" value="RNA-binding_domain_S1_IF1"/>
</dbReference>
<dbReference type="InterPro" id="IPR003029">
    <property type="entry name" value="S1_domain"/>
</dbReference>
<dbReference type="InterPro" id="IPR004368">
    <property type="entry name" value="TIF_IF1"/>
</dbReference>
<dbReference type="NCBIfam" id="TIGR00008">
    <property type="entry name" value="infA"/>
    <property type="match status" value="1"/>
</dbReference>
<dbReference type="PANTHER" id="PTHR33370">
    <property type="entry name" value="TRANSLATION INITIATION FACTOR IF-1, CHLOROPLASTIC"/>
    <property type="match status" value="1"/>
</dbReference>
<dbReference type="PANTHER" id="PTHR33370:SF1">
    <property type="entry name" value="TRANSLATION INITIATION FACTOR IF-1, CHLOROPLASTIC"/>
    <property type="match status" value="1"/>
</dbReference>
<dbReference type="Pfam" id="PF01176">
    <property type="entry name" value="eIF-1a"/>
    <property type="match status" value="1"/>
</dbReference>
<dbReference type="SMART" id="SM00316">
    <property type="entry name" value="S1"/>
    <property type="match status" value="1"/>
</dbReference>
<dbReference type="SUPFAM" id="SSF50249">
    <property type="entry name" value="Nucleic acid-binding proteins"/>
    <property type="match status" value="1"/>
</dbReference>
<dbReference type="PROSITE" id="PS50832">
    <property type="entry name" value="S1_IF1_TYPE"/>
    <property type="match status" value="1"/>
</dbReference>
<reference key="1">
    <citation type="journal article" date="2006" name="Nat. Biotechnol.">
        <title>Complete genome sequence of the entomopathogenic and metabolically versatile soil bacterium Pseudomonas entomophila.</title>
        <authorList>
            <person name="Vodovar N."/>
            <person name="Vallenet D."/>
            <person name="Cruveiller S."/>
            <person name="Rouy Z."/>
            <person name="Barbe V."/>
            <person name="Acosta C."/>
            <person name="Cattolico L."/>
            <person name="Jubin C."/>
            <person name="Lajus A."/>
            <person name="Segurens B."/>
            <person name="Vacherie B."/>
            <person name="Wincker P."/>
            <person name="Weissenbach J."/>
            <person name="Lemaitre B."/>
            <person name="Medigue C."/>
            <person name="Boccard F."/>
        </authorList>
    </citation>
    <scope>NUCLEOTIDE SEQUENCE [LARGE SCALE GENOMIC DNA]</scope>
    <source>
        <strain>L48</strain>
    </source>
</reference>
<evidence type="ECO:0000255" key="1">
    <source>
        <dbReference type="HAMAP-Rule" id="MF_00075"/>
    </source>
</evidence>
<organism>
    <name type="scientific">Pseudomonas entomophila (strain L48)</name>
    <dbReference type="NCBI Taxonomy" id="384676"/>
    <lineage>
        <taxon>Bacteria</taxon>
        <taxon>Pseudomonadati</taxon>
        <taxon>Pseudomonadota</taxon>
        <taxon>Gammaproteobacteria</taxon>
        <taxon>Pseudomonadales</taxon>
        <taxon>Pseudomonadaceae</taxon>
        <taxon>Pseudomonas</taxon>
    </lineage>
</organism>
<feature type="chain" id="PRO_0000338889" description="Translation initiation factor IF-1">
    <location>
        <begin position="1"/>
        <end position="72"/>
    </location>
</feature>
<feature type="domain" description="S1-like" evidence="1">
    <location>
        <begin position="1"/>
        <end position="72"/>
    </location>
</feature>
<comment type="function">
    <text evidence="1">One of the essential components for the initiation of protein synthesis. Stabilizes the binding of IF-2 and IF-3 on the 30S subunit to which N-formylmethionyl-tRNA(fMet) subsequently binds. Helps modulate mRNA selection, yielding the 30S pre-initiation complex (PIC). Upon addition of the 50S ribosomal subunit IF-1, IF-2 and IF-3 are released leaving the mature 70S translation initiation complex.</text>
</comment>
<comment type="subunit">
    <text evidence="1">Component of the 30S ribosomal translation pre-initiation complex which assembles on the 30S ribosome in the order IF-2 and IF-3, IF-1 and N-formylmethionyl-tRNA(fMet); mRNA recruitment can occur at any time during PIC assembly.</text>
</comment>
<comment type="subcellular location">
    <subcellularLocation>
        <location evidence="1">Cytoplasm</location>
    </subcellularLocation>
</comment>
<comment type="similarity">
    <text evidence="1">Belongs to the IF-1 family.</text>
</comment>
<name>IF1_PSEE4</name>
<accession>Q1IBD7</accession>
<protein>
    <recommendedName>
        <fullName evidence="1">Translation initiation factor IF-1</fullName>
    </recommendedName>
</protein>
<keyword id="KW-0963">Cytoplasm</keyword>
<keyword id="KW-0396">Initiation factor</keyword>
<keyword id="KW-0648">Protein biosynthesis</keyword>
<keyword id="KW-0694">RNA-binding</keyword>
<keyword id="KW-0699">rRNA-binding</keyword>